<feature type="chain" id="PRO_1000097533" description="Queuine tRNA-ribosyltransferase">
    <location>
        <begin position="1"/>
        <end position="375"/>
    </location>
</feature>
<feature type="region of interest" description="RNA binding" evidence="1">
    <location>
        <begin position="248"/>
        <end position="254"/>
    </location>
</feature>
<feature type="region of interest" description="RNA binding; important for wobble base 34 recognition" evidence="1">
    <location>
        <begin position="272"/>
        <end position="276"/>
    </location>
</feature>
<feature type="active site" description="Proton acceptor" evidence="1">
    <location>
        <position position="90"/>
    </location>
</feature>
<feature type="active site" description="Nucleophile" evidence="1">
    <location>
        <position position="267"/>
    </location>
</feature>
<feature type="binding site" evidence="1">
    <location>
        <begin position="90"/>
        <end position="94"/>
    </location>
    <ligand>
        <name>substrate</name>
    </ligand>
</feature>
<feature type="binding site" evidence="1">
    <location>
        <position position="144"/>
    </location>
    <ligand>
        <name>substrate</name>
    </ligand>
</feature>
<feature type="binding site" evidence="1">
    <location>
        <position position="190"/>
    </location>
    <ligand>
        <name>substrate</name>
    </ligand>
</feature>
<feature type="binding site" evidence="1">
    <location>
        <position position="217"/>
    </location>
    <ligand>
        <name>substrate</name>
    </ligand>
</feature>
<feature type="binding site" evidence="1">
    <location>
        <position position="305"/>
    </location>
    <ligand>
        <name>Zn(2+)</name>
        <dbReference type="ChEBI" id="CHEBI:29105"/>
    </ligand>
</feature>
<feature type="binding site" evidence="1">
    <location>
        <position position="307"/>
    </location>
    <ligand>
        <name>Zn(2+)</name>
        <dbReference type="ChEBI" id="CHEBI:29105"/>
    </ligand>
</feature>
<feature type="binding site" evidence="1">
    <location>
        <position position="310"/>
    </location>
    <ligand>
        <name>Zn(2+)</name>
        <dbReference type="ChEBI" id="CHEBI:29105"/>
    </ligand>
</feature>
<feature type="binding site" evidence="1">
    <location>
        <position position="336"/>
    </location>
    <ligand>
        <name>Zn(2+)</name>
        <dbReference type="ChEBI" id="CHEBI:29105"/>
    </ligand>
</feature>
<keyword id="KW-0328">Glycosyltransferase</keyword>
<keyword id="KW-0479">Metal-binding</keyword>
<keyword id="KW-0671">Queuosine biosynthesis</keyword>
<keyword id="KW-0808">Transferase</keyword>
<keyword id="KW-0819">tRNA processing</keyword>
<keyword id="KW-0862">Zinc</keyword>
<dbReference type="EC" id="2.4.2.29" evidence="1"/>
<dbReference type="EMBL" id="CP000993">
    <property type="protein sequence ID" value="ACH95031.1"/>
    <property type="molecule type" value="Genomic_DNA"/>
</dbReference>
<dbReference type="RefSeq" id="WP_012539183.1">
    <property type="nucleotide sequence ID" value="NC_011244.1"/>
</dbReference>
<dbReference type="SMR" id="B5RQE7"/>
<dbReference type="KEGG" id="bre:BRE_820"/>
<dbReference type="HOGENOM" id="CLU_022060_0_1_12"/>
<dbReference type="UniPathway" id="UPA00392"/>
<dbReference type="Proteomes" id="UP000000612">
    <property type="component" value="Chromosome"/>
</dbReference>
<dbReference type="GO" id="GO:0005829">
    <property type="term" value="C:cytosol"/>
    <property type="evidence" value="ECO:0007669"/>
    <property type="project" value="TreeGrafter"/>
</dbReference>
<dbReference type="GO" id="GO:0046872">
    <property type="term" value="F:metal ion binding"/>
    <property type="evidence" value="ECO:0007669"/>
    <property type="project" value="UniProtKB-KW"/>
</dbReference>
<dbReference type="GO" id="GO:0008479">
    <property type="term" value="F:tRNA-guanosine(34) queuine transglycosylase activity"/>
    <property type="evidence" value="ECO:0007669"/>
    <property type="project" value="UniProtKB-UniRule"/>
</dbReference>
<dbReference type="GO" id="GO:0008616">
    <property type="term" value="P:queuosine biosynthetic process"/>
    <property type="evidence" value="ECO:0007669"/>
    <property type="project" value="UniProtKB-UniRule"/>
</dbReference>
<dbReference type="GO" id="GO:0002099">
    <property type="term" value="P:tRNA wobble guanine modification"/>
    <property type="evidence" value="ECO:0007669"/>
    <property type="project" value="TreeGrafter"/>
</dbReference>
<dbReference type="GO" id="GO:0101030">
    <property type="term" value="P:tRNA-guanine transglycosylation"/>
    <property type="evidence" value="ECO:0007669"/>
    <property type="project" value="InterPro"/>
</dbReference>
<dbReference type="Gene3D" id="3.20.20.105">
    <property type="entry name" value="Queuine tRNA-ribosyltransferase-like"/>
    <property type="match status" value="1"/>
</dbReference>
<dbReference type="HAMAP" id="MF_00168">
    <property type="entry name" value="Q_tRNA_Tgt"/>
    <property type="match status" value="1"/>
</dbReference>
<dbReference type="InterPro" id="IPR050076">
    <property type="entry name" value="ArchSynthase1/Queuine_TRR"/>
</dbReference>
<dbReference type="InterPro" id="IPR004803">
    <property type="entry name" value="TGT"/>
</dbReference>
<dbReference type="InterPro" id="IPR036511">
    <property type="entry name" value="TGT-like_sf"/>
</dbReference>
<dbReference type="InterPro" id="IPR002616">
    <property type="entry name" value="tRNA_ribo_trans-like"/>
</dbReference>
<dbReference type="NCBIfam" id="TIGR00430">
    <property type="entry name" value="Q_tRNA_tgt"/>
    <property type="match status" value="1"/>
</dbReference>
<dbReference type="NCBIfam" id="TIGR00449">
    <property type="entry name" value="tgt_general"/>
    <property type="match status" value="1"/>
</dbReference>
<dbReference type="PANTHER" id="PTHR46499">
    <property type="entry name" value="QUEUINE TRNA-RIBOSYLTRANSFERASE"/>
    <property type="match status" value="1"/>
</dbReference>
<dbReference type="PANTHER" id="PTHR46499:SF1">
    <property type="entry name" value="QUEUINE TRNA-RIBOSYLTRANSFERASE"/>
    <property type="match status" value="1"/>
</dbReference>
<dbReference type="Pfam" id="PF01702">
    <property type="entry name" value="TGT"/>
    <property type="match status" value="1"/>
</dbReference>
<dbReference type="SUPFAM" id="SSF51713">
    <property type="entry name" value="tRNA-guanine transglycosylase"/>
    <property type="match status" value="1"/>
</dbReference>
<sequence>MFNIIKNDKNSNARLGILELPHGNVATPCFMPVGTLGVMKALKHDVLEKLGCDLMLANTYHLYLRPGIDVIKKYGNLHNFTTWNKNFLTDSGGFQVFSLSNFRKIEDEGVDFKSHIDGSRHYFTPESVFSMQETFESDIIMALDICSPYGIDYDEASLYTNITTSWARRTLCAYKNRKEGYEGLLFLITQGNFFKDLRKRSTELILELNSPGIAIGGISVGEPRDRYLEILEYNSSLIPKDKPKYVMGIGTPHYILDAIYNGIDIFDCVNPTRIARHGSLLTDNGILRINRAEFCFDTCSVERECSCTLCTRYSRGYLRHLFKSEEALGVMLASEHNIHYMFRLINKTKNAIMNDNFVKFRKLYLDKYDEGNLNE</sequence>
<accession>B5RQE7</accession>
<proteinExistence type="inferred from homology"/>
<protein>
    <recommendedName>
        <fullName evidence="1">Queuine tRNA-ribosyltransferase</fullName>
        <ecNumber evidence="1">2.4.2.29</ecNumber>
    </recommendedName>
    <alternativeName>
        <fullName evidence="1">Guanine insertion enzyme</fullName>
    </alternativeName>
    <alternativeName>
        <fullName evidence="1">tRNA-guanine transglycosylase</fullName>
    </alternativeName>
</protein>
<name>TGT_BORRA</name>
<gene>
    <name evidence="1" type="primary">tgt</name>
    <name type="ordered locus">BRE_820</name>
</gene>
<evidence type="ECO:0000255" key="1">
    <source>
        <dbReference type="HAMAP-Rule" id="MF_00168"/>
    </source>
</evidence>
<reference key="1">
    <citation type="journal article" date="2008" name="PLoS Genet.">
        <title>The genome of Borrelia recurrentis, the agent of deadly louse-borne relapsing fever, is a degraded subset of tick-borne Borrelia duttonii.</title>
        <authorList>
            <person name="Lescot M."/>
            <person name="Audic S."/>
            <person name="Robert C."/>
            <person name="Nguyen T.T."/>
            <person name="Blanc G."/>
            <person name="Cutler S.J."/>
            <person name="Wincker P."/>
            <person name="Couloux A."/>
            <person name="Claverie J.-M."/>
            <person name="Raoult D."/>
            <person name="Drancourt M."/>
        </authorList>
    </citation>
    <scope>NUCLEOTIDE SEQUENCE [LARGE SCALE GENOMIC DNA]</scope>
    <source>
        <strain>A1</strain>
    </source>
</reference>
<organism>
    <name type="scientific">Borrelia recurrentis (strain A1)</name>
    <dbReference type="NCBI Taxonomy" id="412418"/>
    <lineage>
        <taxon>Bacteria</taxon>
        <taxon>Pseudomonadati</taxon>
        <taxon>Spirochaetota</taxon>
        <taxon>Spirochaetia</taxon>
        <taxon>Spirochaetales</taxon>
        <taxon>Borreliaceae</taxon>
        <taxon>Borrelia</taxon>
    </lineage>
</organism>
<comment type="function">
    <text evidence="1">Catalyzes the base-exchange of a guanine (G) residue with the queuine precursor 7-aminomethyl-7-deazaguanine (PreQ1) at position 34 (anticodon wobble position) in tRNAs with GU(N) anticodons (tRNA-Asp, -Asn, -His and -Tyr). Catalysis occurs through a double-displacement mechanism. The nucleophile active site attacks the C1' of nucleotide 34 to detach the guanine base from the RNA, forming a covalent enzyme-RNA intermediate. The proton acceptor active site deprotonates the incoming PreQ1, allowing a nucleophilic attack on the C1' of the ribose to form the product. After dissociation, two additional enzymatic reactions on the tRNA convert PreQ1 to queuine (Q), resulting in the hypermodified nucleoside queuosine (7-(((4,5-cis-dihydroxy-2-cyclopenten-1-yl)amino)methyl)-7-deazaguanosine).</text>
</comment>
<comment type="catalytic activity">
    <reaction evidence="1">
        <text>7-aminomethyl-7-carbaguanine + guanosine(34) in tRNA = 7-aminomethyl-7-carbaguanosine(34) in tRNA + guanine</text>
        <dbReference type="Rhea" id="RHEA:24104"/>
        <dbReference type="Rhea" id="RHEA-COMP:10341"/>
        <dbReference type="Rhea" id="RHEA-COMP:10342"/>
        <dbReference type="ChEBI" id="CHEBI:16235"/>
        <dbReference type="ChEBI" id="CHEBI:58703"/>
        <dbReference type="ChEBI" id="CHEBI:74269"/>
        <dbReference type="ChEBI" id="CHEBI:82833"/>
        <dbReference type="EC" id="2.4.2.29"/>
    </reaction>
</comment>
<comment type="cofactor">
    <cofactor evidence="1">
        <name>Zn(2+)</name>
        <dbReference type="ChEBI" id="CHEBI:29105"/>
    </cofactor>
    <text evidence="1">Binds 1 zinc ion per subunit.</text>
</comment>
<comment type="pathway">
    <text evidence="1">tRNA modification; tRNA-queuosine biosynthesis.</text>
</comment>
<comment type="subunit">
    <text evidence="1">Homodimer. Within each dimer, one monomer is responsible for RNA recognition and catalysis, while the other monomer binds to the replacement base PreQ1.</text>
</comment>
<comment type="similarity">
    <text evidence="1">Belongs to the queuine tRNA-ribosyltransferase family.</text>
</comment>